<accession>P21601</accession>
<proteinExistence type="predicted"/>
<organism>
    <name type="scientific">Human cytomegalovirus (strain AD169)</name>
    <name type="common">HHV-5</name>
    <name type="synonym">Human herpesvirus 5</name>
    <dbReference type="NCBI Taxonomy" id="10360"/>
    <lineage>
        <taxon>Viruses</taxon>
        <taxon>Duplodnaviria</taxon>
        <taxon>Heunggongvirae</taxon>
        <taxon>Peploviricota</taxon>
        <taxon>Herviviricetes</taxon>
        <taxon>Herpesvirales</taxon>
        <taxon>Orthoherpesviridae</taxon>
        <taxon>Betaherpesvirinae</taxon>
        <taxon>Cytomegalovirus</taxon>
        <taxon>Cytomegalovirus humanbeta5</taxon>
        <taxon>Human cytomegalovirus</taxon>
    </lineage>
</organism>
<name>IR14_HCMVA</name>
<sequence length="183" mass="20749">MRPQLRGNQRNRIRWWQHNSKKCNQTEKWHNVDWISKQPLRGRTRRDRLLHELDAASQSDPLPGGDGLTGGDSKATRRTSPRYYPPSEATAGRWPVDRFLRVPLQRAPDPRLRTIHPVTESALARKSRGLAGVTRQIHRAVPQHIADYNDGGDMGSRFDNLPGVAASVEACGNHVLVTRRSRT</sequence>
<dbReference type="EMBL" id="X17403">
    <property type="protein sequence ID" value="CAA35296.1"/>
    <property type="molecule type" value="Genomic_DNA"/>
</dbReference>
<dbReference type="PIR" id="S09899">
    <property type="entry name" value="S09899"/>
</dbReference>
<dbReference type="Proteomes" id="UP000008991">
    <property type="component" value="Segment"/>
</dbReference>
<protein>
    <recommendedName>
        <fullName>Uncharacterized protein IRL14</fullName>
    </recommendedName>
</protein>
<feature type="chain" id="PRO_0000115260" description="Uncharacterized protein IRL14">
    <location>
        <begin position="1"/>
        <end position="183"/>
    </location>
</feature>
<feature type="region of interest" description="Disordered" evidence="1">
    <location>
        <begin position="54"/>
        <end position="89"/>
    </location>
</feature>
<evidence type="ECO:0000256" key="1">
    <source>
        <dbReference type="SAM" id="MobiDB-lite"/>
    </source>
</evidence>
<organismHost>
    <name type="scientific">Homo sapiens</name>
    <name type="common">Human</name>
    <dbReference type="NCBI Taxonomy" id="9606"/>
</organismHost>
<reference key="1">
    <citation type="journal article" date="1990" name="Curr. Top. Microbiol. Immunol.">
        <title>Analysis of the protein-coding content of the sequence of human cytomegalovirus strain AD169.</title>
        <authorList>
            <person name="Chee M.S."/>
            <person name="Bankier A.T."/>
            <person name="Beck S."/>
            <person name="Bohni R."/>
            <person name="Brown C.M."/>
            <person name="Cerny R."/>
            <person name="Horsnell T."/>
            <person name="Hutchison C.A. III"/>
            <person name="Kouzarides T."/>
            <person name="Martignetti J.A."/>
            <person name="Preddie E."/>
            <person name="Satchwell S.C."/>
            <person name="Tomlinson P."/>
            <person name="Weston K.M."/>
            <person name="Barrell B.G."/>
        </authorList>
    </citation>
    <scope>NUCLEOTIDE SEQUENCE [LARGE SCALE GENOMIC DNA]</scope>
</reference>